<sequence length="397" mass="42868">MTTLLNPYFGEFGGMYVPQILMPALNQLEEAFVSAQKDPEFQAQFADLLKNYAGRPTALTKCQNITAGTRTTLYLKREDLLHGGAHKTNQVLGQALLAKRMGKSEIIAETGAGQHGVASALASALLGLKCRIYMGAKDVERQSPNVFRMRLMGAEVIPVHSGSATLKDACNEALRDWSGSYETAHYMLGTAAGPHPYPTIVREFQRMIGEETKAQILDKEGRLPDAVIACVGGGSNAIGMFADFINDTSVGLIGVEPGGHGIETGEHGAPLKHGRVGIYFGMKAPMMQTADGQIEESYSISAGLDFPSVGPQHAYLNSIGRADYVSITDDEALEAFKTLCRHEGIIPALESSHALAHALKMMREQPEKEQLLVVNLSGRGDKDIFTVHDILKARGEI</sequence>
<reference key="1">
    <citation type="journal article" date="2004" name="Nat. Genet.">
        <title>Comparison of genome degradation in Paratyphi A and Typhi, human-restricted serovars of Salmonella enterica that cause typhoid.</title>
        <authorList>
            <person name="McClelland M."/>
            <person name="Sanderson K.E."/>
            <person name="Clifton S.W."/>
            <person name="Latreille P."/>
            <person name="Porwollik S."/>
            <person name="Sabo A."/>
            <person name="Meyer R."/>
            <person name="Bieri T."/>
            <person name="Ozersky P."/>
            <person name="McLellan M."/>
            <person name="Harkins C.R."/>
            <person name="Wang C."/>
            <person name="Nguyen C."/>
            <person name="Berghoff A."/>
            <person name="Elliott G."/>
            <person name="Kohlberg S."/>
            <person name="Strong C."/>
            <person name="Du F."/>
            <person name="Carter J."/>
            <person name="Kremizki C."/>
            <person name="Layman D."/>
            <person name="Leonard S."/>
            <person name="Sun H."/>
            <person name="Fulton L."/>
            <person name="Nash W."/>
            <person name="Miner T."/>
            <person name="Minx P."/>
            <person name="Delehaunty K."/>
            <person name="Fronick C."/>
            <person name="Magrini V."/>
            <person name="Nhan M."/>
            <person name="Warren W."/>
            <person name="Florea L."/>
            <person name="Spieth J."/>
            <person name="Wilson R.K."/>
        </authorList>
    </citation>
    <scope>NUCLEOTIDE SEQUENCE [LARGE SCALE GENOMIC DNA]</scope>
    <source>
        <strain>ATCC 9150 / SARB42</strain>
    </source>
</reference>
<accession>Q5PD17</accession>
<feature type="chain" id="PRO_1000018384" description="Tryptophan synthase beta chain">
    <location>
        <begin position="1"/>
        <end position="397"/>
    </location>
</feature>
<feature type="modified residue" description="N6-(pyridoxal phosphate)lysine" evidence="1">
    <location>
        <position position="87"/>
    </location>
</feature>
<organism>
    <name type="scientific">Salmonella paratyphi A (strain ATCC 9150 / SARB42)</name>
    <dbReference type="NCBI Taxonomy" id="295319"/>
    <lineage>
        <taxon>Bacteria</taxon>
        <taxon>Pseudomonadati</taxon>
        <taxon>Pseudomonadota</taxon>
        <taxon>Gammaproteobacteria</taxon>
        <taxon>Enterobacterales</taxon>
        <taxon>Enterobacteriaceae</taxon>
        <taxon>Salmonella</taxon>
    </lineage>
</organism>
<dbReference type="EC" id="4.2.1.20" evidence="1"/>
<dbReference type="EMBL" id="CP000026">
    <property type="protein sequence ID" value="AAV77112.1"/>
    <property type="molecule type" value="Genomic_DNA"/>
</dbReference>
<dbReference type="RefSeq" id="WP_000209485.1">
    <property type="nucleotide sequence ID" value="NC_006511.1"/>
</dbReference>
<dbReference type="SMR" id="Q5PD17"/>
<dbReference type="KEGG" id="spt:SPA1151"/>
<dbReference type="HOGENOM" id="CLU_016734_3_1_6"/>
<dbReference type="UniPathway" id="UPA00035">
    <property type="reaction ID" value="UER00044"/>
</dbReference>
<dbReference type="Proteomes" id="UP000008185">
    <property type="component" value="Chromosome"/>
</dbReference>
<dbReference type="GO" id="GO:0005737">
    <property type="term" value="C:cytoplasm"/>
    <property type="evidence" value="ECO:0007669"/>
    <property type="project" value="TreeGrafter"/>
</dbReference>
<dbReference type="GO" id="GO:0004834">
    <property type="term" value="F:tryptophan synthase activity"/>
    <property type="evidence" value="ECO:0007669"/>
    <property type="project" value="UniProtKB-UniRule"/>
</dbReference>
<dbReference type="CDD" id="cd06446">
    <property type="entry name" value="Trp-synth_B"/>
    <property type="match status" value="1"/>
</dbReference>
<dbReference type="FunFam" id="3.40.50.1100:FF:000001">
    <property type="entry name" value="Tryptophan synthase beta chain"/>
    <property type="match status" value="1"/>
</dbReference>
<dbReference type="FunFam" id="3.40.50.1100:FF:000004">
    <property type="entry name" value="Tryptophan synthase beta chain"/>
    <property type="match status" value="1"/>
</dbReference>
<dbReference type="Gene3D" id="3.40.50.1100">
    <property type="match status" value="2"/>
</dbReference>
<dbReference type="HAMAP" id="MF_00133">
    <property type="entry name" value="Trp_synth_beta"/>
    <property type="match status" value="1"/>
</dbReference>
<dbReference type="InterPro" id="IPR006653">
    <property type="entry name" value="Trp_synth_b_CS"/>
</dbReference>
<dbReference type="InterPro" id="IPR006654">
    <property type="entry name" value="Trp_synth_beta"/>
</dbReference>
<dbReference type="InterPro" id="IPR023026">
    <property type="entry name" value="Trp_synth_beta/beta-like"/>
</dbReference>
<dbReference type="InterPro" id="IPR001926">
    <property type="entry name" value="TrpB-like_PALP"/>
</dbReference>
<dbReference type="InterPro" id="IPR036052">
    <property type="entry name" value="TrpB-like_PALP_sf"/>
</dbReference>
<dbReference type="NCBIfam" id="TIGR00263">
    <property type="entry name" value="trpB"/>
    <property type="match status" value="1"/>
</dbReference>
<dbReference type="PANTHER" id="PTHR48077:SF3">
    <property type="entry name" value="TRYPTOPHAN SYNTHASE"/>
    <property type="match status" value="1"/>
</dbReference>
<dbReference type="PANTHER" id="PTHR48077">
    <property type="entry name" value="TRYPTOPHAN SYNTHASE-RELATED"/>
    <property type="match status" value="1"/>
</dbReference>
<dbReference type="Pfam" id="PF00291">
    <property type="entry name" value="PALP"/>
    <property type="match status" value="1"/>
</dbReference>
<dbReference type="PIRSF" id="PIRSF001413">
    <property type="entry name" value="Trp_syn_beta"/>
    <property type="match status" value="1"/>
</dbReference>
<dbReference type="SUPFAM" id="SSF53686">
    <property type="entry name" value="Tryptophan synthase beta subunit-like PLP-dependent enzymes"/>
    <property type="match status" value="1"/>
</dbReference>
<dbReference type="PROSITE" id="PS00168">
    <property type="entry name" value="TRP_SYNTHASE_BETA"/>
    <property type="match status" value="1"/>
</dbReference>
<keyword id="KW-0028">Amino-acid biosynthesis</keyword>
<keyword id="KW-0057">Aromatic amino acid biosynthesis</keyword>
<keyword id="KW-0456">Lyase</keyword>
<keyword id="KW-0663">Pyridoxal phosphate</keyword>
<keyword id="KW-0822">Tryptophan biosynthesis</keyword>
<evidence type="ECO:0000255" key="1">
    <source>
        <dbReference type="HAMAP-Rule" id="MF_00133"/>
    </source>
</evidence>
<name>TRPB_SALPA</name>
<gene>
    <name evidence="1" type="primary">trpB</name>
    <name type="ordered locus">SPA1151</name>
</gene>
<protein>
    <recommendedName>
        <fullName evidence="1">Tryptophan synthase beta chain</fullName>
        <ecNumber evidence="1">4.2.1.20</ecNumber>
    </recommendedName>
</protein>
<comment type="function">
    <text evidence="1">The beta subunit is responsible for the synthesis of L-tryptophan from indole and L-serine.</text>
</comment>
<comment type="catalytic activity">
    <reaction evidence="1">
        <text>(1S,2R)-1-C-(indol-3-yl)glycerol 3-phosphate + L-serine = D-glyceraldehyde 3-phosphate + L-tryptophan + H2O</text>
        <dbReference type="Rhea" id="RHEA:10532"/>
        <dbReference type="ChEBI" id="CHEBI:15377"/>
        <dbReference type="ChEBI" id="CHEBI:33384"/>
        <dbReference type="ChEBI" id="CHEBI:57912"/>
        <dbReference type="ChEBI" id="CHEBI:58866"/>
        <dbReference type="ChEBI" id="CHEBI:59776"/>
        <dbReference type="EC" id="4.2.1.20"/>
    </reaction>
</comment>
<comment type="cofactor">
    <cofactor evidence="1">
        <name>pyridoxal 5'-phosphate</name>
        <dbReference type="ChEBI" id="CHEBI:597326"/>
    </cofactor>
</comment>
<comment type="pathway">
    <text evidence="1">Amino-acid biosynthesis; L-tryptophan biosynthesis; L-tryptophan from chorismate: step 5/5.</text>
</comment>
<comment type="subunit">
    <text evidence="1">Tetramer of two alpha and two beta chains.</text>
</comment>
<comment type="similarity">
    <text evidence="1">Belongs to the TrpB family.</text>
</comment>
<proteinExistence type="inferred from homology"/>